<name>GPDA_PARL1</name>
<keyword id="KW-0963">Cytoplasm</keyword>
<keyword id="KW-0444">Lipid biosynthesis</keyword>
<keyword id="KW-0443">Lipid metabolism</keyword>
<keyword id="KW-0520">NAD</keyword>
<keyword id="KW-0521">NADP</keyword>
<keyword id="KW-0547">Nucleotide-binding</keyword>
<keyword id="KW-0560">Oxidoreductase</keyword>
<keyword id="KW-0594">Phospholipid biosynthesis</keyword>
<keyword id="KW-1208">Phospholipid metabolism</keyword>
<keyword id="KW-1185">Reference proteome</keyword>
<proteinExistence type="inferred from homology"/>
<accession>A7HST0</accession>
<protein>
    <recommendedName>
        <fullName evidence="1">Glycerol-3-phosphate dehydrogenase [NAD(P)+]</fullName>
        <ecNumber evidence="1">1.1.1.94</ecNumber>
    </recommendedName>
    <alternativeName>
        <fullName evidence="1">NAD(P)(+)-dependent glycerol-3-phosphate dehydrogenase</fullName>
    </alternativeName>
    <alternativeName>
        <fullName evidence="1">NAD(P)H-dependent dihydroxyacetone-phosphate reductase</fullName>
    </alternativeName>
</protein>
<dbReference type="EC" id="1.1.1.94" evidence="1"/>
<dbReference type="EMBL" id="CP000774">
    <property type="protein sequence ID" value="ABS62963.1"/>
    <property type="molecule type" value="Genomic_DNA"/>
</dbReference>
<dbReference type="RefSeq" id="WP_012110237.1">
    <property type="nucleotide sequence ID" value="NC_009719.1"/>
</dbReference>
<dbReference type="SMR" id="A7HST0"/>
<dbReference type="STRING" id="402881.Plav_1343"/>
<dbReference type="KEGG" id="pla:Plav_1343"/>
<dbReference type="eggNOG" id="COG0240">
    <property type="taxonomic scope" value="Bacteria"/>
</dbReference>
<dbReference type="HOGENOM" id="CLU_033449_0_2_5"/>
<dbReference type="OrthoDB" id="9812273at2"/>
<dbReference type="UniPathway" id="UPA00940"/>
<dbReference type="Proteomes" id="UP000006377">
    <property type="component" value="Chromosome"/>
</dbReference>
<dbReference type="GO" id="GO:0005829">
    <property type="term" value="C:cytosol"/>
    <property type="evidence" value="ECO:0007669"/>
    <property type="project" value="TreeGrafter"/>
</dbReference>
<dbReference type="GO" id="GO:0047952">
    <property type="term" value="F:glycerol-3-phosphate dehydrogenase [NAD(P)+] activity"/>
    <property type="evidence" value="ECO:0007669"/>
    <property type="project" value="UniProtKB-UniRule"/>
</dbReference>
<dbReference type="GO" id="GO:0051287">
    <property type="term" value="F:NAD binding"/>
    <property type="evidence" value="ECO:0007669"/>
    <property type="project" value="InterPro"/>
</dbReference>
<dbReference type="GO" id="GO:0005975">
    <property type="term" value="P:carbohydrate metabolic process"/>
    <property type="evidence" value="ECO:0007669"/>
    <property type="project" value="InterPro"/>
</dbReference>
<dbReference type="GO" id="GO:0046167">
    <property type="term" value="P:glycerol-3-phosphate biosynthetic process"/>
    <property type="evidence" value="ECO:0007669"/>
    <property type="project" value="UniProtKB-UniRule"/>
</dbReference>
<dbReference type="GO" id="GO:0046168">
    <property type="term" value="P:glycerol-3-phosphate catabolic process"/>
    <property type="evidence" value="ECO:0007669"/>
    <property type="project" value="InterPro"/>
</dbReference>
<dbReference type="GO" id="GO:0006650">
    <property type="term" value="P:glycerophospholipid metabolic process"/>
    <property type="evidence" value="ECO:0007669"/>
    <property type="project" value="UniProtKB-UniRule"/>
</dbReference>
<dbReference type="GO" id="GO:0008654">
    <property type="term" value="P:phospholipid biosynthetic process"/>
    <property type="evidence" value="ECO:0007669"/>
    <property type="project" value="UniProtKB-KW"/>
</dbReference>
<dbReference type="FunFam" id="1.10.1040.10:FF:000001">
    <property type="entry name" value="Glycerol-3-phosphate dehydrogenase [NAD(P)+]"/>
    <property type="match status" value="1"/>
</dbReference>
<dbReference type="FunFam" id="3.40.50.720:FF:000019">
    <property type="entry name" value="Glycerol-3-phosphate dehydrogenase [NAD(P)+]"/>
    <property type="match status" value="1"/>
</dbReference>
<dbReference type="Gene3D" id="1.10.1040.10">
    <property type="entry name" value="N-(1-d-carboxylethyl)-l-norvaline Dehydrogenase, domain 2"/>
    <property type="match status" value="1"/>
</dbReference>
<dbReference type="Gene3D" id="3.40.50.720">
    <property type="entry name" value="NAD(P)-binding Rossmann-like Domain"/>
    <property type="match status" value="1"/>
</dbReference>
<dbReference type="HAMAP" id="MF_00394">
    <property type="entry name" value="NAD_Glyc3P_dehydrog"/>
    <property type="match status" value="1"/>
</dbReference>
<dbReference type="InterPro" id="IPR008927">
    <property type="entry name" value="6-PGluconate_DH-like_C_sf"/>
</dbReference>
<dbReference type="InterPro" id="IPR013328">
    <property type="entry name" value="6PGD_dom2"/>
</dbReference>
<dbReference type="InterPro" id="IPR006168">
    <property type="entry name" value="G3P_DH_NAD-dep"/>
</dbReference>
<dbReference type="InterPro" id="IPR006109">
    <property type="entry name" value="G3P_DH_NAD-dep_C"/>
</dbReference>
<dbReference type="InterPro" id="IPR011128">
    <property type="entry name" value="G3P_DH_NAD-dep_N"/>
</dbReference>
<dbReference type="InterPro" id="IPR036291">
    <property type="entry name" value="NAD(P)-bd_dom_sf"/>
</dbReference>
<dbReference type="NCBIfam" id="NF000940">
    <property type="entry name" value="PRK00094.1-2"/>
    <property type="match status" value="1"/>
</dbReference>
<dbReference type="NCBIfam" id="NF000942">
    <property type="entry name" value="PRK00094.1-4"/>
    <property type="match status" value="1"/>
</dbReference>
<dbReference type="PANTHER" id="PTHR11728">
    <property type="entry name" value="GLYCEROL-3-PHOSPHATE DEHYDROGENASE"/>
    <property type="match status" value="1"/>
</dbReference>
<dbReference type="PANTHER" id="PTHR11728:SF1">
    <property type="entry name" value="GLYCEROL-3-PHOSPHATE DEHYDROGENASE [NAD(+)] 2, CHLOROPLASTIC"/>
    <property type="match status" value="1"/>
</dbReference>
<dbReference type="Pfam" id="PF07479">
    <property type="entry name" value="NAD_Gly3P_dh_C"/>
    <property type="match status" value="1"/>
</dbReference>
<dbReference type="Pfam" id="PF01210">
    <property type="entry name" value="NAD_Gly3P_dh_N"/>
    <property type="match status" value="1"/>
</dbReference>
<dbReference type="PIRSF" id="PIRSF000114">
    <property type="entry name" value="Glycerol-3-P_dh"/>
    <property type="match status" value="1"/>
</dbReference>
<dbReference type="PRINTS" id="PR00077">
    <property type="entry name" value="GPDHDRGNASE"/>
</dbReference>
<dbReference type="SUPFAM" id="SSF48179">
    <property type="entry name" value="6-phosphogluconate dehydrogenase C-terminal domain-like"/>
    <property type="match status" value="1"/>
</dbReference>
<dbReference type="SUPFAM" id="SSF51735">
    <property type="entry name" value="NAD(P)-binding Rossmann-fold domains"/>
    <property type="match status" value="1"/>
</dbReference>
<dbReference type="PROSITE" id="PS00957">
    <property type="entry name" value="NAD_G3PDH"/>
    <property type="match status" value="1"/>
</dbReference>
<organism>
    <name type="scientific">Parvibaculum lavamentivorans (strain DS-1 / DSM 13023 / NCIMB 13966)</name>
    <dbReference type="NCBI Taxonomy" id="402881"/>
    <lineage>
        <taxon>Bacteria</taxon>
        <taxon>Pseudomonadati</taxon>
        <taxon>Pseudomonadota</taxon>
        <taxon>Alphaproteobacteria</taxon>
        <taxon>Hyphomicrobiales</taxon>
        <taxon>Parvibaculaceae</taxon>
        <taxon>Parvibaculum</taxon>
    </lineage>
</organism>
<feature type="chain" id="PRO_1000072233" description="Glycerol-3-phosphate dehydrogenase [NAD(P)+]">
    <location>
        <begin position="1"/>
        <end position="333"/>
    </location>
</feature>
<feature type="active site" description="Proton acceptor" evidence="1">
    <location>
        <position position="192"/>
    </location>
</feature>
<feature type="binding site" evidence="1">
    <location>
        <position position="16"/>
    </location>
    <ligand>
        <name>NADPH</name>
        <dbReference type="ChEBI" id="CHEBI:57783"/>
    </ligand>
</feature>
<feature type="binding site" evidence="1">
    <location>
        <position position="36"/>
    </location>
    <ligand>
        <name>NADPH</name>
        <dbReference type="ChEBI" id="CHEBI:57783"/>
    </ligand>
</feature>
<feature type="binding site" evidence="1">
    <location>
        <position position="109"/>
    </location>
    <ligand>
        <name>NADPH</name>
        <dbReference type="ChEBI" id="CHEBI:57783"/>
    </ligand>
</feature>
<feature type="binding site" evidence="1">
    <location>
        <position position="109"/>
    </location>
    <ligand>
        <name>sn-glycerol 3-phosphate</name>
        <dbReference type="ChEBI" id="CHEBI:57597"/>
    </ligand>
</feature>
<feature type="binding site" evidence="1">
    <location>
        <position position="137"/>
    </location>
    <ligand>
        <name>sn-glycerol 3-phosphate</name>
        <dbReference type="ChEBI" id="CHEBI:57597"/>
    </ligand>
</feature>
<feature type="binding site" evidence="1">
    <location>
        <position position="139"/>
    </location>
    <ligand>
        <name>sn-glycerol 3-phosphate</name>
        <dbReference type="ChEBI" id="CHEBI:57597"/>
    </ligand>
</feature>
<feature type="binding site" evidence="1">
    <location>
        <position position="141"/>
    </location>
    <ligand>
        <name>NADPH</name>
        <dbReference type="ChEBI" id="CHEBI:57783"/>
    </ligand>
</feature>
<feature type="binding site" evidence="1">
    <location>
        <position position="192"/>
    </location>
    <ligand>
        <name>sn-glycerol 3-phosphate</name>
        <dbReference type="ChEBI" id="CHEBI:57597"/>
    </ligand>
</feature>
<feature type="binding site" evidence="1">
    <location>
        <position position="245"/>
    </location>
    <ligand>
        <name>sn-glycerol 3-phosphate</name>
        <dbReference type="ChEBI" id="CHEBI:57597"/>
    </ligand>
</feature>
<feature type="binding site" evidence="1">
    <location>
        <position position="255"/>
    </location>
    <ligand>
        <name>sn-glycerol 3-phosphate</name>
        <dbReference type="ChEBI" id="CHEBI:57597"/>
    </ligand>
</feature>
<feature type="binding site" evidence="1">
    <location>
        <position position="256"/>
    </location>
    <ligand>
        <name>NADPH</name>
        <dbReference type="ChEBI" id="CHEBI:57783"/>
    </ligand>
</feature>
<feature type="binding site" evidence="1">
    <location>
        <position position="256"/>
    </location>
    <ligand>
        <name>sn-glycerol 3-phosphate</name>
        <dbReference type="ChEBI" id="CHEBI:57597"/>
    </ligand>
</feature>
<feature type="binding site" evidence="1">
    <location>
        <position position="257"/>
    </location>
    <ligand>
        <name>sn-glycerol 3-phosphate</name>
        <dbReference type="ChEBI" id="CHEBI:57597"/>
    </ligand>
</feature>
<feature type="binding site" evidence="1">
    <location>
        <position position="280"/>
    </location>
    <ligand>
        <name>NADPH</name>
        <dbReference type="ChEBI" id="CHEBI:57783"/>
    </ligand>
</feature>
<feature type="binding site" evidence="1">
    <location>
        <position position="282"/>
    </location>
    <ligand>
        <name>NADPH</name>
        <dbReference type="ChEBI" id="CHEBI:57783"/>
    </ligand>
</feature>
<comment type="function">
    <text evidence="1">Catalyzes the reduction of the glycolytic intermediate dihydroxyacetone phosphate (DHAP) to sn-glycerol 3-phosphate (G3P), the key precursor for phospholipid synthesis.</text>
</comment>
<comment type="catalytic activity">
    <reaction evidence="1">
        <text>sn-glycerol 3-phosphate + NAD(+) = dihydroxyacetone phosphate + NADH + H(+)</text>
        <dbReference type="Rhea" id="RHEA:11092"/>
        <dbReference type="ChEBI" id="CHEBI:15378"/>
        <dbReference type="ChEBI" id="CHEBI:57540"/>
        <dbReference type="ChEBI" id="CHEBI:57597"/>
        <dbReference type="ChEBI" id="CHEBI:57642"/>
        <dbReference type="ChEBI" id="CHEBI:57945"/>
        <dbReference type="EC" id="1.1.1.94"/>
    </reaction>
    <physiologicalReaction direction="right-to-left" evidence="1">
        <dbReference type="Rhea" id="RHEA:11094"/>
    </physiologicalReaction>
</comment>
<comment type="catalytic activity">
    <reaction evidence="1">
        <text>sn-glycerol 3-phosphate + NADP(+) = dihydroxyacetone phosphate + NADPH + H(+)</text>
        <dbReference type="Rhea" id="RHEA:11096"/>
        <dbReference type="ChEBI" id="CHEBI:15378"/>
        <dbReference type="ChEBI" id="CHEBI:57597"/>
        <dbReference type="ChEBI" id="CHEBI:57642"/>
        <dbReference type="ChEBI" id="CHEBI:57783"/>
        <dbReference type="ChEBI" id="CHEBI:58349"/>
        <dbReference type="EC" id="1.1.1.94"/>
    </reaction>
    <physiologicalReaction direction="right-to-left" evidence="1">
        <dbReference type="Rhea" id="RHEA:11098"/>
    </physiologicalReaction>
</comment>
<comment type="pathway">
    <text evidence="1">Membrane lipid metabolism; glycerophospholipid metabolism.</text>
</comment>
<comment type="subcellular location">
    <subcellularLocation>
        <location evidence="1">Cytoplasm</location>
    </subcellularLocation>
</comment>
<comment type="similarity">
    <text evidence="1">Belongs to the NAD-dependent glycerol-3-phosphate dehydrogenase family.</text>
</comment>
<sequence>MTLAYRKIAVVGAGAWGTALAQVAASAGREVVLWAREDELVQNVNTAHENSLFLPGIALHKSIRATGDLAEAAEADALLMVTPAQHMRGVLEQLAPRIAEGKPVVLCAKGVEQSTHLLLTEVLAEAAPQAAAAVLSGPSFAAEVARGLPTAVTLACEDETVAEALTHAIGITTFRPYYSSDLIGAELGGAVKNVLAIACGIVEGKKFGDSARAALTTRGFAELTRLGLAMGARTETLMGLSGLGDLILTCNSPKSRNMSLGMALGEGKTLEEVMGARNSVSEGVHSATAVVALARKHGIEMPIAEAVARIVTGAAKVDDAVAALLSRPFRSET</sequence>
<reference key="1">
    <citation type="journal article" date="2011" name="Stand. Genomic Sci.">
        <title>Complete genome sequence of Parvibaculum lavamentivorans type strain (DS-1(T)).</title>
        <authorList>
            <person name="Schleheck D."/>
            <person name="Weiss M."/>
            <person name="Pitluck S."/>
            <person name="Bruce D."/>
            <person name="Land M.L."/>
            <person name="Han S."/>
            <person name="Saunders E."/>
            <person name="Tapia R."/>
            <person name="Detter C."/>
            <person name="Brettin T."/>
            <person name="Han J."/>
            <person name="Woyke T."/>
            <person name="Goodwin L."/>
            <person name="Pennacchio L."/>
            <person name="Nolan M."/>
            <person name="Cook A.M."/>
            <person name="Kjelleberg S."/>
            <person name="Thomas T."/>
        </authorList>
    </citation>
    <scope>NUCLEOTIDE SEQUENCE [LARGE SCALE GENOMIC DNA]</scope>
    <source>
        <strain>DS-1 / DSM 13023 / NCIMB 13966</strain>
    </source>
</reference>
<evidence type="ECO:0000255" key="1">
    <source>
        <dbReference type="HAMAP-Rule" id="MF_00394"/>
    </source>
</evidence>
<gene>
    <name evidence="1" type="primary">gpsA</name>
    <name type="ordered locus">Plav_1343</name>
</gene>